<accession>Q5U1Z2</accession>
<proteinExistence type="evidence at transcript level"/>
<reference key="1">
    <citation type="journal article" date="2004" name="Genome Res.">
        <title>The status, quality, and expansion of the NIH full-length cDNA project: the Mammalian Gene Collection (MGC).</title>
        <authorList>
            <consortium name="The MGC Project Team"/>
        </authorList>
    </citation>
    <scope>NUCLEOTIDE SEQUENCE [LARGE SCALE MRNA]</scope>
    <source>
        <tissue>Ovary</tissue>
    </source>
</reference>
<protein>
    <recommendedName>
        <fullName>Trafficking protein particle complex subunit 3</fullName>
    </recommendedName>
</protein>
<dbReference type="EMBL" id="BC086377">
    <property type="protein sequence ID" value="AAH86377.1"/>
    <property type="molecule type" value="mRNA"/>
</dbReference>
<dbReference type="RefSeq" id="NP_001008377.1">
    <property type="nucleotide sequence ID" value="NM_001008376.1"/>
</dbReference>
<dbReference type="SMR" id="Q5U1Z2"/>
<dbReference type="BioGRID" id="263569">
    <property type="interactions" value="2"/>
</dbReference>
<dbReference type="FunCoup" id="Q5U1Z2">
    <property type="interactions" value="3686"/>
</dbReference>
<dbReference type="IntAct" id="Q5U1Z2">
    <property type="interactions" value="2"/>
</dbReference>
<dbReference type="MINT" id="Q5U1Z2"/>
<dbReference type="STRING" id="10116.ENSRNOP00000014383"/>
<dbReference type="PhosphoSitePlus" id="Q5U1Z2"/>
<dbReference type="SwissPalm" id="Q5U1Z2"/>
<dbReference type="jPOST" id="Q5U1Z2"/>
<dbReference type="PaxDb" id="10116-ENSRNOP00000014383"/>
<dbReference type="GeneID" id="362599"/>
<dbReference type="KEGG" id="rno:362599"/>
<dbReference type="UCSC" id="RGD:1309135">
    <property type="organism name" value="rat"/>
</dbReference>
<dbReference type="AGR" id="RGD:1309135"/>
<dbReference type="CTD" id="27095"/>
<dbReference type="RGD" id="1309135">
    <property type="gene designation" value="Trappc3"/>
</dbReference>
<dbReference type="VEuPathDB" id="HostDB:ENSRNOG00000010550"/>
<dbReference type="eggNOG" id="KOG3330">
    <property type="taxonomic scope" value="Eukaryota"/>
</dbReference>
<dbReference type="HOGENOM" id="CLU_087110_0_0_1"/>
<dbReference type="InParanoid" id="Q5U1Z2"/>
<dbReference type="OrthoDB" id="7222at9989"/>
<dbReference type="PhylomeDB" id="Q5U1Z2"/>
<dbReference type="TreeFam" id="TF300091"/>
<dbReference type="Reactome" id="R-RNO-204005">
    <property type="pathway name" value="COPII-mediated vesicle transport"/>
</dbReference>
<dbReference type="Reactome" id="R-RNO-8876198">
    <property type="pathway name" value="RAB GEFs exchange GTP for GDP on RABs"/>
</dbReference>
<dbReference type="PRO" id="PR:Q5U1Z2"/>
<dbReference type="Proteomes" id="UP000002494">
    <property type="component" value="Chromosome 5"/>
</dbReference>
<dbReference type="Bgee" id="ENSRNOG00000010550">
    <property type="expression patterns" value="Expressed in cerebellum and 20 other cell types or tissues"/>
</dbReference>
<dbReference type="GO" id="GO:0033106">
    <property type="term" value="C:cis-Golgi network membrane"/>
    <property type="evidence" value="ECO:0000318"/>
    <property type="project" value="GO_Central"/>
</dbReference>
<dbReference type="GO" id="GO:0005829">
    <property type="term" value="C:cytosol"/>
    <property type="evidence" value="ECO:0000266"/>
    <property type="project" value="RGD"/>
</dbReference>
<dbReference type="GO" id="GO:0005783">
    <property type="term" value="C:endoplasmic reticulum"/>
    <property type="evidence" value="ECO:0007669"/>
    <property type="project" value="UniProtKB-SubCell"/>
</dbReference>
<dbReference type="GO" id="GO:0000139">
    <property type="term" value="C:Golgi membrane"/>
    <property type="evidence" value="ECO:0000266"/>
    <property type="project" value="RGD"/>
</dbReference>
<dbReference type="GO" id="GO:0030008">
    <property type="term" value="C:TRAPP complex"/>
    <property type="evidence" value="ECO:0000266"/>
    <property type="project" value="RGD"/>
</dbReference>
<dbReference type="GO" id="GO:0006888">
    <property type="term" value="P:endoplasmic reticulum to Golgi vesicle-mediated transport"/>
    <property type="evidence" value="ECO:0000266"/>
    <property type="project" value="RGD"/>
</dbReference>
<dbReference type="GO" id="GO:0006891">
    <property type="term" value="P:intra-Golgi vesicle-mediated transport"/>
    <property type="evidence" value="ECO:0000318"/>
    <property type="project" value="GO_Central"/>
</dbReference>
<dbReference type="CDD" id="cd14942">
    <property type="entry name" value="TRAPPC3_bet3"/>
    <property type="match status" value="1"/>
</dbReference>
<dbReference type="FunFam" id="3.30.1380.20:FF:000003">
    <property type="entry name" value="Trafficking protein particle complex subunit"/>
    <property type="match status" value="1"/>
</dbReference>
<dbReference type="Gene3D" id="3.30.1380.20">
    <property type="entry name" value="Trafficking protein particle complex subunit 3"/>
    <property type="match status" value="1"/>
</dbReference>
<dbReference type="InterPro" id="IPR016721">
    <property type="entry name" value="Bet3"/>
</dbReference>
<dbReference type="InterPro" id="IPR024096">
    <property type="entry name" value="NO_sig/Golgi_transp_ligand-bd"/>
</dbReference>
<dbReference type="InterPro" id="IPR007194">
    <property type="entry name" value="TRAPP_component"/>
</dbReference>
<dbReference type="PANTHER" id="PTHR13048">
    <property type="entry name" value="TRAFFICKING PROTEIN PARTICLE COMPLEX SUBUNIT 3"/>
    <property type="match status" value="1"/>
</dbReference>
<dbReference type="Pfam" id="PF04051">
    <property type="entry name" value="TRAPP"/>
    <property type="match status" value="1"/>
</dbReference>
<dbReference type="PIRSF" id="PIRSF018293">
    <property type="entry name" value="TRAPP_I_complex_Bet3"/>
    <property type="match status" value="1"/>
</dbReference>
<dbReference type="SUPFAM" id="SSF111126">
    <property type="entry name" value="Ligand-binding domain in the NO signalling and Golgi transport"/>
    <property type="match status" value="1"/>
</dbReference>
<evidence type="ECO:0000250" key="1"/>
<evidence type="ECO:0000250" key="2">
    <source>
        <dbReference type="UniProtKB" id="O43617"/>
    </source>
</evidence>
<evidence type="ECO:0000305" key="3"/>
<evidence type="ECO:0000312" key="4">
    <source>
        <dbReference type="RGD" id="1309135"/>
    </source>
</evidence>
<gene>
    <name evidence="4" type="primary">Trappc3</name>
</gene>
<comment type="function">
    <text evidence="1">May play a role in vesicular transport from endoplasmic reticulum to Golgi.</text>
</comment>
<comment type="subunit">
    <text evidence="2">Homodimer. Component of the multisubunit transport protein particle (TRAPP) complex, which includes at least TRAPPC2, TRAPPC2L, TRAPPC3, TRAPPC3L, TRAPPC4, TRAPPC5, TRAPPC8, TRAPPC9, TRAPPC10, TRAPPC11 and TRAPPC12. Heterodimer with TRAPPC6A. The heterodimer TRAPPC3-TRAPPC6A interacts with TRAPPC2L. Heterodimer with TRAPPC6b. The heterodimer TRAPPC6B-TRAPPC3 interacts with TRAPPC1 likely providing a core for TRAPP complex formation.</text>
</comment>
<comment type="subcellular location">
    <subcellularLocation>
        <location evidence="1">Golgi apparatus</location>
        <location evidence="1">cis-Golgi network</location>
    </subcellularLocation>
    <subcellularLocation>
        <location evidence="1">Endoplasmic reticulum</location>
    </subcellularLocation>
</comment>
<comment type="similarity">
    <text evidence="3">Belongs to the TRAPP small subunits family. BET3 subfamily.</text>
</comment>
<keyword id="KW-0256">Endoplasmic reticulum</keyword>
<keyword id="KW-0931">ER-Golgi transport</keyword>
<keyword id="KW-0333">Golgi apparatus</keyword>
<keyword id="KW-0449">Lipoprotein</keyword>
<keyword id="KW-0564">Palmitate</keyword>
<keyword id="KW-1185">Reference proteome</keyword>
<keyword id="KW-0813">Transport</keyword>
<name>TPPC3_RAT</name>
<sequence length="180" mass="20302">MSRQANRGTESKKMSSELFTLTYGALVTQLCKDYENDEDVNKQLDRMGYNIGVRLIEDFLARSNVGRCHDFRETADVIAKVAFKMYLGITPSITNWSPAGDEFSLILENNPLVDFVELPDNHSALIYSNLLCGVLRGALEMVQMAVEAKFVQDTLKGDGVTEIRMRFIRRIEDNLPAGEE</sequence>
<feature type="chain" id="PRO_0000211574" description="Trafficking protein particle complex subunit 3">
    <location>
        <begin position="1"/>
        <end position="180"/>
    </location>
</feature>
<feature type="lipid moiety-binding region" description="S-palmitoyl cysteine" evidence="1">
    <location>
        <position position="68"/>
    </location>
</feature>
<organism>
    <name type="scientific">Rattus norvegicus</name>
    <name type="common">Rat</name>
    <dbReference type="NCBI Taxonomy" id="10116"/>
    <lineage>
        <taxon>Eukaryota</taxon>
        <taxon>Metazoa</taxon>
        <taxon>Chordata</taxon>
        <taxon>Craniata</taxon>
        <taxon>Vertebrata</taxon>
        <taxon>Euteleostomi</taxon>
        <taxon>Mammalia</taxon>
        <taxon>Eutheria</taxon>
        <taxon>Euarchontoglires</taxon>
        <taxon>Glires</taxon>
        <taxon>Rodentia</taxon>
        <taxon>Myomorpha</taxon>
        <taxon>Muroidea</taxon>
        <taxon>Muridae</taxon>
        <taxon>Murinae</taxon>
        <taxon>Rattus</taxon>
    </lineage>
</organism>